<proteinExistence type="evidence at protein level"/>
<accession>P31442</accession>
<accession>Q2M7Y6</accession>
<gene>
    <name type="primary">emrD</name>
    <name type="synonym">yicQ</name>
    <name type="ordered locus">b3673</name>
    <name type="ordered locus">JW5634</name>
</gene>
<evidence type="ECO:0000255" key="1"/>
<evidence type="ECO:0000305" key="2"/>
<evidence type="ECO:0007829" key="3">
    <source>
        <dbReference type="PDB" id="2GFP"/>
    </source>
</evidence>
<protein>
    <recommendedName>
        <fullName>Multidrug resistance protein D</fullName>
    </recommendedName>
</protein>
<dbReference type="EMBL" id="L10328">
    <property type="protein sequence ID" value="AAA62025.1"/>
    <property type="status" value="ALT_INIT"/>
    <property type="molecule type" value="Genomic_DNA"/>
</dbReference>
<dbReference type="EMBL" id="U00096">
    <property type="protein sequence ID" value="AAC76696.2"/>
    <property type="molecule type" value="Genomic_DNA"/>
</dbReference>
<dbReference type="EMBL" id="AP009048">
    <property type="protein sequence ID" value="BAE77620.1"/>
    <property type="molecule type" value="Genomic_DNA"/>
</dbReference>
<dbReference type="PIR" id="B65169">
    <property type="entry name" value="B65169"/>
</dbReference>
<dbReference type="RefSeq" id="NP_418129.2">
    <property type="nucleotide sequence ID" value="NC_000913.3"/>
</dbReference>
<dbReference type="RefSeq" id="WP_000828746.1">
    <property type="nucleotide sequence ID" value="NZ_SSZK01000035.1"/>
</dbReference>
<dbReference type="PDB" id="2GFP">
    <property type="method" value="X-ray"/>
    <property type="resolution" value="3.50 A"/>
    <property type="chains" value="A/B=9-383"/>
</dbReference>
<dbReference type="PDBsum" id="2GFP"/>
<dbReference type="SMR" id="P31442"/>
<dbReference type="BioGRID" id="4261242">
    <property type="interactions" value="128"/>
</dbReference>
<dbReference type="FunCoup" id="P31442">
    <property type="interactions" value="164"/>
</dbReference>
<dbReference type="STRING" id="511145.b3673"/>
<dbReference type="TCDB" id="2.A.1.2.9">
    <property type="family name" value="the major facilitator superfamily (mfs)"/>
</dbReference>
<dbReference type="PaxDb" id="511145-b3673"/>
<dbReference type="EnsemblBacteria" id="AAC76696">
    <property type="protein sequence ID" value="AAC76696"/>
    <property type="gene ID" value="b3673"/>
</dbReference>
<dbReference type="GeneID" id="75205388"/>
<dbReference type="GeneID" id="948180"/>
<dbReference type="KEGG" id="ecj:JW5634"/>
<dbReference type="KEGG" id="eco:b3673"/>
<dbReference type="KEGG" id="ecoc:C3026_19920"/>
<dbReference type="PATRIC" id="fig|511145.12.peg.3794"/>
<dbReference type="EchoBASE" id="EB1644"/>
<dbReference type="eggNOG" id="COG2814">
    <property type="taxonomic scope" value="Bacteria"/>
</dbReference>
<dbReference type="HOGENOM" id="CLU_001265_47_1_6"/>
<dbReference type="InParanoid" id="P31442"/>
<dbReference type="OMA" id="YYVIVTM"/>
<dbReference type="OrthoDB" id="9814303at2"/>
<dbReference type="PhylomeDB" id="P31442"/>
<dbReference type="BioCyc" id="EcoCyc:EMRD-MONOMER"/>
<dbReference type="BioCyc" id="MetaCyc:EMRD-MONOMER"/>
<dbReference type="EvolutionaryTrace" id="P31442"/>
<dbReference type="PRO" id="PR:P31442"/>
<dbReference type="Proteomes" id="UP000000625">
    <property type="component" value="Chromosome"/>
</dbReference>
<dbReference type="GO" id="GO:0005886">
    <property type="term" value="C:plasma membrane"/>
    <property type="evidence" value="ECO:0000314"/>
    <property type="project" value="EcoCyc"/>
</dbReference>
<dbReference type="GO" id="GO:0022857">
    <property type="term" value="F:transmembrane transporter activity"/>
    <property type="evidence" value="ECO:0000318"/>
    <property type="project" value="GO_Central"/>
</dbReference>
<dbReference type="GO" id="GO:0042910">
    <property type="term" value="F:xenobiotic transmembrane transporter activity"/>
    <property type="evidence" value="ECO:0007669"/>
    <property type="project" value="InterPro"/>
</dbReference>
<dbReference type="GO" id="GO:1990961">
    <property type="term" value="P:xenobiotic detoxification by transmembrane export across the plasma membrane"/>
    <property type="evidence" value="ECO:0000315"/>
    <property type="project" value="EcoCyc"/>
</dbReference>
<dbReference type="CDD" id="cd17320">
    <property type="entry name" value="MFS_MdfA_MDR_like"/>
    <property type="match status" value="1"/>
</dbReference>
<dbReference type="FunFam" id="1.20.1720.10:FF:000006">
    <property type="entry name" value="Multidrug resistance protein D"/>
    <property type="match status" value="1"/>
</dbReference>
<dbReference type="Gene3D" id="1.20.1720.10">
    <property type="entry name" value="Multidrug resistance protein D"/>
    <property type="match status" value="1"/>
</dbReference>
<dbReference type="InterPro" id="IPR011701">
    <property type="entry name" value="MFS"/>
</dbReference>
<dbReference type="InterPro" id="IPR020846">
    <property type="entry name" value="MFS_dom"/>
</dbReference>
<dbReference type="InterPro" id="IPR036259">
    <property type="entry name" value="MFS_trans_sf"/>
</dbReference>
<dbReference type="InterPro" id="IPR004734">
    <property type="entry name" value="Multidrug-R"/>
</dbReference>
<dbReference type="NCBIfam" id="TIGR00880">
    <property type="entry name" value="2_A_01_02"/>
    <property type="match status" value="1"/>
</dbReference>
<dbReference type="NCBIfam" id="NF008654">
    <property type="entry name" value="PRK11652.1"/>
    <property type="match status" value="1"/>
</dbReference>
<dbReference type="PANTHER" id="PTHR42718">
    <property type="entry name" value="MAJOR FACILITATOR SUPERFAMILY MULTIDRUG TRANSPORTER MFSC"/>
    <property type="match status" value="1"/>
</dbReference>
<dbReference type="PANTHER" id="PTHR42718:SF9">
    <property type="entry name" value="MAJOR FACILITATOR SUPERFAMILY MULTIDRUG TRANSPORTER MFSC"/>
    <property type="match status" value="1"/>
</dbReference>
<dbReference type="Pfam" id="PF07690">
    <property type="entry name" value="MFS_1"/>
    <property type="match status" value="1"/>
</dbReference>
<dbReference type="SUPFAM" id="SSF103473">
    <property type="entry name" value="MFS general substrate transporter"/>
    <property type="match status" value="1"/>
</dbReference>
<dbReference type="PROSITE" id="PS50850">
    <property type="entry name" value="MFS"/>
    <property type="match status" value="1"/>
</dbReference>
<comment type="function">
    <text>Multidrug resistance pump that participates in a low energy shock adaptive response.</text>
</comment>
<comment type="subcellular location">
    <subcellularLocation>
        <location>Cell inner membrane</location>
        <topology>Multi-pass membrane protein</topology>
    </subcellularLocation>
</comment>
<comment type="similarity">
    <text evidence="2">Belongs to the major facilitator superfamily.</text>
</comment>
<comment type="sequence caution" evidence="2">
    <conflict type="erroneous initiation">
        <sequence resource="EMBL-CDS" id="AAA62025"/>
    </conflict>
    <text>Extended N-terminus.</text>
</comment>
<name>EMRD_ECOLI</name>
<reference key="1">
    <citation type="journal article" date="1993" name="Biochem. Biophys. Res. Commun.">
        <title>An E. coli gene emrD is involved in adaptation to low energy shock.</title>
        <authorList>
            <person name="Naroditskaya V."/>
            <person name="Schloseer M.J."/>
            <person name="Fan N.Y."/>
            <person name="Lewis K."/>
        </authorList>
    </citation>
    <scope>NUCLEOTIDE SEQUENCE [GENOMIC DNA]</scope>
    <scope>CHARACTERIZATION</scope>
</reference>
<reference key="2">
    <citation type="journal article" date="1993" name="Genomics">
        <title>DNA sequence and analysis of 136 kilobases of the Escherichia coli genome: organizational symmetry around the origin of replication.</title>
        <authorList>
            <person name="Burland V.D."/>
            <person name="Plunkett G. III"/>
            <person name="Daniels D.L."/>
            <person name="Blattner F.R."/>
        </authorList>
    </citation>
    <scope>NUCLEOTIDE SEQUENCE [LARGE SCALE GENOMIC DNA]</scope>
    <source>
        <strain>K12 / MG1655 / ATCC 47076</strain>
    </source>
</reference>
<reference key="3">
    <citation type="journal article" date="1997" name="Science">
        <title>The complete genome sequence of Escherichia coli K-12.</title>
        <authorList>
            <person name="Blattner F.R."/>
            <person name="Plunkett G. III"/>
            <person name="Bloch C.A."/>
            <person name="Perna N.T."/>
            <person name="Burland V."/>
            <person name="Riley M."/>
            <person name="Collado-Vides J."/>
            <person name="Glasner J.D."/>
            <person name="Rode C.K."/>
            <person name="Mayhew G.F."/>
            <person name="Gregor J."/>
            <person name="Davis N.W."/>
            <person name="Kirkpatrick H.A."/>
            <person name="Goeden M.A."/>
            <person name="Rose D.J."/>
            <person name="Mau B."/>
            <person name="Shao Y."/>
        </authorList>
    </citation>
    <scope>NUCLEOTIDE SEQUENCE [LARGE SCALE GENOMIC DNA]</scope>
    <source>
        <strain>K12 / MG1655 / ATCC 47076</strain>
    </source>
</reference>
<reference key="4">
    <citation type="journal article" date="2006" name="Mol. Syst. Biol.">
        <title>Highly accurate genome sequences of Escherichia coli K-12 strains MG1655 and W3110.</title>
        <authorList>
            <person name="Hayashi K."/>
            <person name="Morooka N."/>
            <person name="Yamamoto Y."/>
            <person name="Fujita K."/>
            <person name="Isono K."/>
            <person name="Choi S."/>
            <person name="Ohtsubo E."/>
            <person name="Baba T."/>
            <person name="Wanner B.L."/>
            <person name="Mori H."/>
            <person name="Horiuchi T."/>
        </authorList>
    </citation>
    <scope>NUCLEOTIDE SEQUENCE [LARGE SCALE GENOMIC DNA]</scope>
    <source>
        <strain>K12 / W3110 / ATCC 27325 / DSM 5911</strain>
    </source>
</reference>
<reference key="5">
    <citation type="journal article" date="2005" name="Science">
        <title>Global topology analysis of the Escherichia coli inner membrane proteome.</title>
        <authorList>
            <person name="Daley D.O."/>
            <person name="Rapp M."/>
            <person name="Granseth E."/>
            <person name="Melen K."/>
            <person name="Drew D."/>
            <person name="von Heijne G."/>
        </authorList>
    </citation>
    <scope>TOPOLOGY [LARGE SCALE ANALYSIS]</scope>
    <source>
        <strain>K12 / MG1655 / ATCC 47076</strain>
    </source>
</reference>
<organism>
    <name type="scientific">Escherichia coli (strain K12)</name>
    <dbReference type="NCBI Taxonomy" id="83333"/>
    <lineage>
        <taxon>Bacteria</taxon>
        <taxon>Pseudomonadati</taxon>
        <taxon>Pseudomonadota</taxon>
        <taxon>Gammaproteobacteria</taxon>
        <taxon>Enterobacterales</taxon>
        <taxon>Enterobacteriaceae</taxon>
        <taxon>Escherichia</taxon>
    </lineage>
</organism>
<sequence length="394" mass="42216">MKRQRNVNLLLMLVLLVAVGQMAQTIYIPAIADMARDLNVREGAVQSVMGAYLLTYGVSQLFYGPISDRVGRRPVILVGMSIFMLATLVAVTTSSLTVLIAASAMQGMGTGVGGVMARTLPRDLYERTQLRHANSLLNMGILVSPLLAPLIGGLLDTMWNWRACYLFLLVLCAGVTFSMARWMPETRPVDAPRTRLLTSYKTLFGNSGFNCYLLMLIGGLAGIAAFEACSGVLMGAVLGLSSMTVSILFILPIPAAFFGAWFAGRPNKRFSTLMWQSVICCLLAGLLMWIPDWFGVMNVWTLLVPAALFFFGAGMLFPLATSGAMEPFPFLAGTAGALVGGLQNIGSGVLASLSAMLPQTGQGSLGLLMTLMGLLIVLCWLPLATRMSHQGQPV</sequence>
<keyword id="KW-0002">3D-structure</keyword>
<keyword id="KW-0997">Cell inner membrane</keyword>
<keyword id="KW-1003">Cell membrane</keyword>
<keyword id="KW-0472">Membrane</keyword>
<keyword id="KW-1185">Reference proteome</keyword>
<keyword id="KW-0812">Transmembrane</keyword>
<keyword id="KW-1133">Transmembrane helix</keyword>
<keyword id="KW-0813">Transport</keyword>
<feature type="chain" id="PRO_0000173326" description="Multidrug resistance protein D">
    <location>
        <begin position="1"/>
        <end position="394"/>
    </location>
</feature>
<feature type="topological domain" description="Cytoplasmic" evidence="1">
    <location>
        <begin position="1"/>
        <end position="8"/>
    </location>
</feature>
<feature type="transmembrane region" description="Helical" evidence="1">
    <location>
        <begin position="9"/>
        <end position="29"/>
    </location>
</feature>
<feature type="topological domain" description="Periplasmic" evidence="1">
    <location>
        <begin position="30"/>
        <end position="46"/>
    </location>
</feature>
<feature type="transmembrane region" description="Helical" evidence="1">
    <location>
        <begin position="47"/>
        <end position="67"/>
    </location>
</feature>
<feature type="topological domain" description="Cytoplasmic" evidence="1">
    <location>
        <begin position="68"/>
        <end position="73"/>
    </location>
</feature>
<feature type="transmembrane region" description="Helical" evidence="1">
    <location>
        <begin position="74"/>
        <end position="94"/>
    </location>
</feature>
<feature type="topological domain" description="Periplasmic" evidence="1">
    <location>
        <position position="95"/>
    </location>
</feature>
<feature type="transmembrane region" description="Helical" evidence="1">
    <location>
        <begin position="96"/>
        <end position="116"/>
    </location>
</feature>
<feature type="topological domain" description="Cytoplasmic" evidence="1">
    <location>
        <begin position="117"/>
        <end position="134"/>
    </location>
</feature>
<feature type="transmembrane region" description="Helical" evidence="1">
    <location>
        <begin position="135"/>
        <end position="155"/>
    </location>
</feature>
<feature type="topological domain" description="Periplasmic" evidence="1">
    <location>
        <begin position="156"/>
        <end position="162"/>
    </location>
</feature>
<feature type="transmembrane region" description="Helical" evidence="1">
    <location>
        <begin position="163"/>
        <end position="183"/>
    </location>
</feature>
<feature type="topological domain" description="Cytoplasmic" evidence="1">
    <location>
        <begin position="184"/>
        <end position="212"/>
    </location>
</feature>
<feature type="transmembrane region" description="Helical" evidence="1">
    <location>
        <begin position="213"/>
        <end position="233"/>
    </location>
</feature>
<feature type="topological domain" description="Periplasmic" evidence="1">
    <location>
        <begin position="234"/>
        <end position="242"/>
    </location>
</feature>
<feature type="transmembrane region" description="Helical" evidence="1">
    <location>
        <begin position="243"/>
        <end position="263"/>
    </location>
</feature>
<feature type="topological domain" description="Cytoplasmic" evidence="1">
    <location>
        <begin position="264"/>
        <end position="276"/>
    </location>
</feature>
<feature type="transmembrane region" description="Helical" evidence="1">
    <location>
        <begin position="277"/>
        <end position="297"/>
    </location>
</feature>
<feature type="topological domain" description="Periplasmic" evidence="1">
    <location>
        <position position="298"/>
    </location>
</feature>
<feature type="transmembrane region" description="Helical" evidence="1">
    <location>
        <begin position="299"/>
        <end position="319"/>
    </location>
</feature>
<feature type="topological domain" description="Cytoplasmic" evidence="1">
    <location>
        <begin position="320"/>
        <end position="329"/>
    </location>
</feature>
<feature type="transmembrane region" description="Helical" evidence="1">
    <location>
        <begin position="330"/>
        <end position="350"/>
    </location>
</feature>
<feature type="topological domain" description="Periplasmic" evidence="1">
    <location>
        <begin position="351"/>
        <end position="364"/>
    </location>
</feature>
<feature type="transmembrane region" description="Helical" evidence="1">
    <location>
        <begin position="365"/>
        <end position="385"/>
    </location>
</feature>
<feature type="topological domain" description="Cytoplasmic" evidence="1">
    <location>
        <begin position="386"/>
        <end position="394"/>
    </location>
</feature>
<feature type="helix" evidence="3">
    <location>
        <begin position="10"/>
        <end position="35"/>
    </location>
</feature>
<feature type="strand" evidence="3">
    <location>
        <begin position="38"/>
        <end position="40"/>
    </location>
</feature>
<feature type="helix" evidence="3">
    <location>
        <begin position="43"/>
        <end position="60"/>
    </location>
</feature>
<feature type="helix" evidence="3">
    <location>
        <begin position="63"/>
        <end position="67"/>
    </location>
</feature>
<feature type="helix" evidence="3">
    <location>
        <begin position="72"/>
        <end position="76"/>
    </location>
</feature>
<feature type="helix" evidence="3">
    <location>
        <begin position="77"/>
        <end position="126"/>
    </location>
</feature>
<feature type="helix" evidence="3">
    <location>
        <begin position="133"/>
        <end position="154"/>
    </location>
</feature>
<feature type="helix" evidence="3">
    <location>
        <begin position="158"/>
        <end position="176"/>
    </location>
</feature>
<feature type="turn" evidence="3">
    <location>
        <begin position="188"/>
        <end position="190"/>
    </location>
</feature>
<feature type="turn" evidence="3">
    <location>
        <begin position="196"/>
        <end position="198"/>
    </location>
</feature>
<feature type="helix" evidence="3">
    <location>
        <begin position="202"/>
        <end position="229"/>
    </location>
</feature>
<feature type="helix" evidence="3">
    <location>
        <begin position="235"/>
        <end position="250"/>
    </location>
</feature>
<feature type="helix" evidence="3">
    <location>
        <begin position="252"/>
        <end position="264"/>
    </location>
</feature>
<feature type="turn" evidence="3">
    <location>
        <begin position="265"/>
        <end position="268"/>
    </location>
</feature>
<feature type="helix" evidence="3">
    <location>
        <begin position="269"/>
        <end position="283"/>
    </location>
</feature>
<feature type="strand" evidence="3">
    <location>
        <begin position="285"/>
        <end position="289"/>
    </location>
</feature>
<feature type="helix" evidence="3">
    <location>
        <begin position="290"/>
        <end position="315"/>
    </location>
</feature>
<feature type="helix" evidence="3">
    <location>
        <begin position="321"/>
        <end position="325"/>
    </location>
</feature>
<feature type="helix" evidence="3">
    <location>
        <begin position="327"/>
        <end position="348"/>
    </location>
</feature>
<feature type="helix" evidence="3">
    <location>
        <begin position="356"/>
        <end position="377"/>
    </location>
</feature>